<name>G6PI_EXIS2</name>
<evidence type="ECO:0000255" key="1">
    <source>
        <dbReference type="HAMAP-Rule" id="MF_00473"/>
    </source>
</evidence>
<comment type="function">
    <text evidence="1">Catalyzes the reversible isomerization of glucose-6-phosphate to fructose-6-phosphate.</text>
</comment>
<comment type="catalytic activity">
    <reaction evidence="1">
        <text>alpha-D-glucose 6-phosphate = beta-D-fructose 6-phosphate</text>
        <dbReference type="Rhea" id="RHEA:11816"/>
        <dbReference type="ChEBI" id="CHEBI:57634"/>
        <dbReference type="ChEBI" id="CHEBI:58225"/>
        <dbReference type="EC" id="5.3.1.9"/>
    </reaction>
</comment>
<comment type="pathway">
    <text evidence="1">Carbohydrate biosynthesis; gluconeogenesis.</text>
</comment>
<comment type="pathway">
    <text evidence="1">Carbohydrate degradation; glycolysis; D-glyceraldehyde 3-phosphate and glycerone phosphate from D-glucose: step 2/4.</text>
</comment>
<comment type="subcellular location">
    <subcellularLocation>
        <location evidence="1">Cytoplasm</location>
    </subcellularLocation>
</comment>
<comment type="similarity">
    <text evidence="1">Belongs to the GPI family.</text>
</comment>
<organism>
    <name type="scientific">Exiguobacterium sibiricum (strain DSM 17290 / CCUG 55495 / CIP 109462 / JCM 13490 / 255-15)</name>
    <dbReference type="NCBI Taxonomy" id="262543"/>
    <lineage>
        <taxon>Bacteria</taxon>
        <taxon>Bacillati</taxon>
        <taxon>Bacillota</taxon>
        <taxon>Bacilli</taxon>
        <taxon>Bacillales</taxon>
        <taxon>Bacillales Family XII. Incertae Sedis</taxon>
        <taxon>Exiguobacterium</taxon>
    </lineage>
</organism>
<gene>
    <name evidence="1" type="primary">pgi</name>
    <name type="ordered locus">Exig_2289</name>
</gene>
<accession>B1YKI7</accession>
<dbReference type="EC" id="5.3.1.9" evidence="1"/>
<dbReference type="EMBL" id="CP001022">
    <property type="protein sequence ID" value="ACB61740.1"/>
    <property type="molecule type" value="Genomic_DNA"/>
</dbReference>
<dbReference type="RefSeq" id="WP_012371157.1">
    <property type="nucleotide sequence ID" value="NC_010556.1"/>
</dbReference>
<dbReference type="SMR" id="B1YKI7"/>
<dbReference type="STRING" id="262543.Exig_2289"/>
<dbReference type="KEGG" id="esi:Exig_2289"/>
<dbReference type="eggNOG" id="COG0166">
    <property type="taxonomic scope" value="Bacteria"/>
</dbReference>
<dbReference type="HOGENOM" id="CLU_037303_0_1_9"/>
<dbReference type="OrthoDB" id="140919at2"/>
<dbReference type="UniPathway" id="UPA00109">
    <property type="reaction ID" value="UER00181"/>
</dbReference>
<dbReference type="UniPathway" id="UPA00138"/>
<dbReference type="Proteomes" id="UP000001681">
    <property type="component" value="Chromosome"/>
</dbReference>
<dbReference type="GO" id="GO:0005829">
    <property type="term" value="C:cytosol"/>
    <property type="evidence" value="ECO:0007669"/>
    <property type="project" value="TreeGrafter"/>
</dbReference>
<dbReference type="GO" id="GO:0097367">
    <property type="term" value="F:carbohydrate derivative binding"/>
    <property type="evidence" value="ECO:0007669"/>
    <property type="project" value="InterPro"/>
</dbReference>
<dbReference type="GO" id="GO:0004347">
    <property type="term" value="F:glucose-6-phosphate isomerase activity"/>
    <property type="evidence" value="ECO:0007669"/>
    <property type="project" value="UniProtKB-UniRule"/>
</dbReference>
<dbReference type="GO" id="GO:0048029">
    <property type="term" value="F:monosaccharide binding"/>
    <property type="evidence" value="ECO:0007669"/>
    <property type="project" value="TreeGrafter"/>
</dbReference>
<dbReference type="GO" id="GO:0006094">
    <property type="term" value="P:gluconeogenesis"/>
    <property type="evidence" value="ECO:0007669"/>
    <property type="project" value="UniProtKB-UniRule"/>
</dbReference>
<dbReference type="GO" id="GO:0051156">
    <property type="term" value="P:glucose 6-phosphate metabolic process"/>
    <property type="evidence" value="ECO:0007669"/>
    <property type="project" value="TreeGrafter"/>
</dbReference>
<dbReference type="GO" id="GO:0006096">
    <property type="term" value="P:glycolytic process"/>
    <property type="evidence" value="ECO:0007669"/>
    <property type="project" value="UniProtKB-UniRule"/>
</dbReference>
<dbReference type="CDD" id="cd05015">
    <property type="entry name" value="SIS_PGI_1"/>
    <property type="match status" value="1"/>
</dbReference>
<dbReference type="CDD" id="cd05016">
    <property type="entry name" value="SIS_PGI_2"/>
    <property type="match status" value="1"/>
</dbReference>
<dbReference type="FunFam" id="3.40.50.10490:FF:000015">
    <property type="entry name" value="Glucose-6-phosphate isomerase"/>
    <property type="match status" value="1"/>
</dbReference>
<dbReference type="FunFam" id="3.40.50.10490:FF:000016">
    <property type="entry name" value="Glucose-6-phosphate isomerase"/>
    <property type="match status" value="1"/>
</dbReference>
<dbReference type="Gene3D" id="3.40.50.10490">
    <property type="entry name" value="Glucose-6-phosphate isomerase like protein, domain 1"/>
    <property type="match status" value="3"/>
</dbReference>
<dbReference type="HAMAP" id="MF_00473">
    <property type="entry name" value="G6P_isomerase"/>
    <property type="match status" value="1"/>
</dbReference>
<dbReference type="InterPro" id="IPR001672">
    <property type="entry name" value="G6P_Isomerase"/>
</dbReference>
<dbReference type="InterPro" id="IPR018189">
    <property type="entry name" value="Phosphoglucose_isomerase_CS"/>
</dbReference>
<dbReference type="InterPro" id="IPR046348">
    <property type="entry name" value="SIS_dom_sf"/>
</dbReference>
<dbReference type="InterPro" id="IPR035476">
    <property type="entry name" value="SIS_PGI_1"/>
</dbReference>
<dbReference type="InterPro" id="IPR035482">
    <property type="entry name" value="SIS_PGI_2"/>
</dbReference>
<dbReference type="NCBIfam" id="NF010697">
    <property type="entry name" value="PRK14097.1"/>
    <property type="match status" value="1"/>
</dbReference>
<dbReference type="PANTHER" id="PTHR11469">
    <property type="entry name" value="GLUCOSE-6-PHOSPHATE ISOMERASE"/>
    <property type="match status" value="1"/>
</dbReference>
<dbReference type="PANTHER" id="PTHR11469:SF1">
    <property type="entry name" value="GLUCOSE-6-PHOSPHATE ISOMERASE"/>
    <property type="match status" value="1"/>
</dbReference>
<dbReference type="Pfam" id="PF00342">
    <property type="entry name" value="PGI"/>
    <property type="match status" value="1"/>
</dbReference>
<dbReference type="PRINTS" id="PR00662">
    <property type="entry name" value="G6PISOMERASE"/>
</dbReference>
<dbReference type="SUPFAM" id="SSF53697">
    <property type="entry name" value="SIS domain"/>
    <property type="match status" value="1"/>
</dbReference>
<dbReference type="PROSITE" id="PS00765">
    <property type="entry name" value="P_GLUCOSE_ISOMERASE_1"/>
    <property type="match status" value="1"/>
</dbReference>
<dbReference type="PROSITE" id="PS00174">
    <property type="entry name" value="P_GLUCOSE_ISOMERASE_2"/>
    <property type="match status" value="1"/>
</dbReference>
<dbReference type="PROSITE" id="PS51463">
    <property type="entry name" value="P_GLUCOSE_ISOMERASE_3"/>
    <property type="match status" value="1"/>
</dbReference>
<reference key="1">
    <citation type="submission" date="2008-04" db="EMBL/GenBank/DDBJ databases">
        <title>Complete sequence of chromosome of Exiguobacterium sibiricum 255-15.</title>
        <authorList>
            <consortium name="US DOE Joint Genome Institute"/>
            <person name="Copeland A."/>
            <person name="Lucas S."/>
            <person name="Lapidus A."/>
            <person name="Glavina del Rio T."/>
            <person name="Dalin E."/>
            <person name="Tice H."/>
            <person name="Bruce D."/>
            <person name="Goodwin L."/>
            <person name="Pitluck S."/>
            <person name="Kiss H."/>
            <person name="Chertkov O."/>
            <person name="Monk C."/>
            <person name="Brettin T."/>
            <person name="Detter J.C."/>
            <person name="Han C."/>
            <person name="Kuske C.R."/>
            <person name="Schmutz J."/>
            <person name="Larimer F."/>
            <person name="Land M."/>
            <person name="Hauser L."/>
            <person name="Kyrpides N."/>
            <person name="Mikhailova N."/>
            <person name="Vishnivetskaya T."/>
            <person name="Rodrigues D.F."/>
            <person name="Gilichinsky D."/>
            <person name="Tiedje J."/>
            <person name="Richardson P."/>
        </authorList>
    </citation>
    <scope>NUCLEOTIDE SEQUENCE [LARGE SCALE GENOMIC DNA]</scope>
    <source>
        <strain>DSM 17290 / CCUG 55495 / CIP 109462 / JCM 13490 / 255-15</strain>
    </source>
</reference>
<keyword id="KW-0963">Cytoplasm</keyword>
<keyword id="KW-0312">Gluconeogenesis</keyword>
<keyword id="KW-0324">Glycolysis</keyword>
<keyword id="KW-0413">Isomerase</keyword>
<keyword id="KW-1185">Reference proteome</keyword>
<proteinExistence type="inferred from homology"/>
<feature type="chain" id="PRO_1000125726" description="Glucose-6-phosphate isomerase">
    <location>
        <begin position="1"/>
        <end position="449"/>
    </location>
</feature>
<feature type="active site" description="Proton donor" evidence="1">
    <location>
        <position position="290"/>
    </location>
</feature>
<feature type="active site" evidence="1">
    <location>
        <position position="311"/>
    </location>
</feature>
<feature type="active site" evidence="1">
    <location>
        <position position="425"/>
    </location>
</feature>
<protein>
    <recommendedName>
        <fullName evidence="1">Glucose-6-phosphate isomerase</fullName>
        <shortName evidence="1">GPI</shortName>
        <ecNumber evidence="1">5.3.1.9</ecNumber>
    </recommendedName>
    <alternativeName>
        <fullName evidence="1">Phosphoglucose isomerase</fullName>
        <shortName evidence="1">PGI</shortName>
    </alternativeName>
    <alternativeName>
        <fullName evidence="1">Phosphohexose isomerase</fullName>
        <shortName evidence="1">PHI</shortName>
    </alternativeName>
</protein>
<sequence>MTTVRFDYSKALQFVGQHEVDYMADTVKTLHGAIHNGTGAGSDFLGWVDLPTNYDKAEFEKIQAAAEKIKSDSDVLLVVGIGGSYLGARAAIEMLGHSFHNLLSKEERKAPQIIYAGHNISSTYLHDLFQVLEGKDVSVNIISKSGTTTEPAISFRLLKTFMEDKYGKAGAKDRIYATTDKARGALKTLADSEGYQTFVIPDDVGGRFSVLTPVGLLPIAAAGISIEELMAGARDAQVQFSNENLAENEAYQYAVVRNALYAKGKTIELLVNYEPALHYVSEWWKQLYGESEGKDFKGIFPAAVDFSTDLHSMGQYVQEGRRDLFETVIKVGQARHALTIEKDAQDLDGLNFLEGKSIQFVNDKAAEGTLLAHTDGQVPNLTVELPEMTPYHLGFLFYFFEKACAMSGYLLGVNPFDQPGVEAYKKNMFALLGKPGFEAEKAELEARLK</sequence>